<gene>
    <name evidence="1" type="primary">acpP</name>
    <name type="ordered locus">Mpe_A0639</name>
</gene>
<dbReference type="EMBL" id="CP000555">
    <property type="protein sequence ID" value="ABM93601.1"/>
    <property type="molecule type" value="Genomic_DNA"/>
</dbReference>
<dbReference type="RefSeq" id="WP_011828239.1">
    <property type="nucleotide sequence ID" value="NC_008825.1"/>
</dbReference>
<dbReference type="SMR" id="A2SDG2"/>
<dbReference type="STRING" id="420662.Mpe_A0639"/>
<dbReference type="KEGG" id="mpt:Mpe_A0639"/>
<dbReference type="eggNOG" id="COG0236">
    <property type="taxonomic scope" value="Bacteria"/>
</dbReference>
<dbReference type="HOGENOM" id="CLU_108696_5_1_4"/>
<dbReference type="UniPathway" id="UPA00094"/>
<dbReference type="Proteomes" id="UP000000366">
    <property type="component" value="Chromosome"/>
</dbReference>
<dbReference type="GO" id="GO:0005829">
    <property type="term" value="C:cytosol"/>
    <property type="evidence" value="ECO:0007669"/>
    <property type="project" value="TreeGrafter"/>
</dbReference>
<dbReference type="GO" id="GO:0016020">
    <property type="term" value="C:membrane"/>
    <property type="evidence" value="ECO:0007669"/>
    <property type="project" value="GOC"/>
</dbReference>
<dbReference type="GO" id="GO:0000035">
    <property type="term" value="F:acyl binding"/>
    <property type="evidence" value="ECO:0007669"/>
    <property type="project" value="TreeGrafter"/>
</dbReference>
<dbReference type="GO" id="GO:0000036">
    <property type="term" value="F:acyl carrier activity"/>
    <property type="evidence" value="ECO:0007669"/>
    <property type="project" value="UniProtKB-UniRule"/>
</dbReference>
<dbReference type="GO" id="GO:0031177">
    <property type="term" value="F:phosphopantetheine binding"/>
    <property type="evidence" value="ECO:0007669"/>
    <property type="project" value="InterPro"/>
</dbReference>
<dbReference type="GO" id="GO:0009245">
    <property type="term" value="P:lipid A biosynthetic process"/>
    <property type="evidence" value="ECO:0007669"/>
    <property type="project" value="TreeGrafter"/>
</dbReference>
<dbReference type="FunFam" id="1.10.1200.10:FF:000001">
    <property type="entry name" value="Acyl carrier protein"/>
    <property type="match status" value="1"/>
</dbReference>
<dbReference type="Gene3D" id="1.10.1200.10">
    <property type="entry name" value="ACP-like"/>
    <property type="match status" value="1"/>
</dbReference>
<dbReference type="HAMAP" id="MF_01217">
    <property type="entry name" value="Acyl_carrier"/>
    <property type="match status" value="1"/>
</dbReference>
<dbReference type="InterPro" id="IPR003231">
    <property type="entry name" value="ACP"/>
</dbReference>
<dbReference type="InterPro" id="IPR036736">
    <property type="entry name" value="ACP-like_sf"/>
</dbReference>
<dbReference type="InterPro" id="IPR020806">
    <property type="entry name" value="PKS_PP-bd"/>
</dbReference>
<dbReference type="InterPro" id="IPR009081">
    <property type="entry name" value="PP-bd_ACP"/>
</dbReference>
<dbReference type="InterPro" id="IPR006162">
    <property type="entry name" value="Ppantetheine_attach_site"/>
</dbReference>
<dbReference type="NCBIfam" id="TIGR00517">
    <property type="entry name" value="acyl_carrier"/>
    <property type="match status" value="1"/>
</dbReference>
<dbReference type="NCBIfam" id="NF002148">
    <property type="entry name" value="PRK00982.1-2"/>
    <property type="match status" value="1"/>
</dbReference>
<dbReference type="NCBIfam" id="NF002149">
    <property type="entry name" value="PRK00982.1-3"/>
    <property type="match status" value="1"/>
</dbReference>
<dbReference type="NCBIfam" id="NF002150">
    <property type="entry name" value="PRK00982.1-4"/>
    <property type="match status" value="1"/>
</dbReference>
<dbReference type="NCBIfam" id="NF002151">
    <property type="entry name" value="PRK00982.1-5"/>
    <property type="match status" value="1"/>
</dbReference>
<dbReference type="PANTHER" id="PTHR20863">
    <property type="entry name" value="ACYL CARRIER PROTEIN"/>
    <property type="match status" value="1"/>
</dbReference>
<dbReference type="PANTHER" id="PTHR20863:SF76">
    <property type="entry name" value="CARRIER DOMAIN-CONTAINING PROTEIN"/>
    <property type="match status" value="1"/>
</dbReference>
<dbReference type="Pfam" id="PF00550">
    <property type="entry name" value="PP-binding"/>
    <property type="match status" value="1"/>
</dbReference>
<dbReference type="SMART" id="SM00823">
    <property type="entry name" value="PKS_PP"/>
    <property type="match status" value="1"/>
</dbReference>
<dbReference type="SUPFAM" id="SSF47336">
    <property type="entry name" value="ACP-like"/>
    <property type="match status" value="1"/>
</dbReference>
<dbReference type="PROSITE" id="PS50075">
    <property type="entry name" value="CARRIER"/>
    <property type="match status" value="1"/>
</dbReference>
<dbReference type="PROSITE" id="PS00012">
    <property type="entry name" value="PHOSPHOPANTETHEINE"/>
    <property type="match status" value="1"/>
</dbReference>
<protein>
    <recommendedName>
        <fullName evidence="1">Acyl carrier protein</fullName>
        <shortName evidence="1">ACP</shortName>
    </recommendedName>
</protein>
<name>ACP_METPP</name>
<reference key="1">
    <citation type="journal article" date="2007" name="J. Bacteriol.">
        <title>Whole-genome analysis of the methyl tert-butyl ether-degrading beta-proteobacterium Methylibium petroleiphilum PM1.</title>
        <authorList>
            <person name="Kane S.R."/>
            <person name="Chakicherla A.Y."/>
            <person name="Chain P.S.G."/>
            <person name="Schmidt R."/>
            <person name="Shin M.W."/>
            <person name="Legler T.C."/>
            <person name="Scow K.M."/>
            <person name="Larimer F.W."/>
            <person name="Lucas S.M."/>
            <person name="Richardson P.M."/>
            <person name="Hristova K.R."/>
        </authorList>
    </citation>
    <scope>NUCLEOTIDE SEQUENCE [LARGE SCALE GENOMIC DNA]</scope>
    <source>
        <strain>ATCC BAA-1232 / LMG 22953 / PM1</strain>
    </source>
</reference>
<comment type="function">
    <text evidence="1">Carrier of the growing fatty acid chain in fatty acid biosynthesis.</text>
</comment>
<comment type="pathway">
    <text evidence="1">Lipid metabolism; fatty acid biosynthesis.</text>
</comment>
<comment type="subcellular location">
    <subcellularLocation>
        <location evidence="1">Cytoplasm</location>
    </subcellularLocation>
</comment>
<comment type="PTM">
    <text evidence="1">4'-phosphopantetheine is transferred from CoA to a specific serine of apo-ACP by AcpS. This modification is essential for activity because fatty acids are bound in thioester linkage to the sulfhydryl of the prosthetic group.</text>
</comment>
<comment type="similarity">
    <text evidence="1">Belongs to the acyl carrier protein (ACP) family.</text>
</comment>
<accession>A2SDG2</accession>
<evidence type="ECO:0000255" key="1">
    <source>
        <dbReference type="HAMAP-Rule" id="MF_01217"/>
    </source>
</evidence>
<evidence type="ECO:0000255" key="2">
    <source>
        <dbReference type="PROSITE-ProRule" id="PRU00258"/>
    </source>
</evidence>
<keyword id="KW-0963">Cytoplasm</keyword>
<keyword id="KW-0275">Fatty acid biosynthesis</keyword>
<keyword id="KW-0276">Fatty acid metabolism</keyword>
<keyword id="KW-0444">Lipid biosynthesis</keyword>
<keyword id="KW-0443">Lipid metabolism</keyword>
<keyword id="KW-0596">Phosphopantetheine</keyword>
<keyword id="KW-0597">Phosphoprotein</keyword>
<keyword id="KW-1185">Reference proteome</keyword>
<sequence length="79" mass="8565">MSDIEARVKKIIAEQLGVAEGEVTNEKAFVADLGADSLDTVELVMALEDEFSIEIPDEEAEKITTVQLAIDYAKSHAKA</sequence>
<proteinExistence type="inferred from homology"/>
<organism>
    <name type="scientific">Methylibium petroleiphilum (strain ATCC BAA-1232 / LMG 22953 / PM1)</name>
    <dbReference type="NCBI Taxonomy" id="420662"/>
    <lineage>
        <taxon>Bacteria</taxon>
        <taxon>Pseudomonadati</taxon>
        <taxon>Pseudomonadota</taxon>
        <taxon>Betaproteobacteria</taxon>
        <taxon>Burkholderiales</taxon>
        <taxon>Sphaerotilaceae</taxon>
        <taxon>Methylibium</taxon>
    </lineage>
</organism>
<feature type="chain" id="PRO_1000066640" description="Acyl carrier protein">
    <location>
        <begin position="1"/>
        <end position="79"/>
    </location>
</feature>
<feature type="domain" description="Carrier" evidence="2">
    <location>
        <begin position="2"/>
        <end position="77"/>
    </location>
</feature>
<feature type="modified residue" description="O-(pantetheine 4'-phosphoryl)serine" evidence="2">
    <location>
        <position position="37"/>
    </location>
</feature>